<feature type="chain" id="PRO_0000153286" description="Interferon-related developmental regulator 1">
    <location>
        <begin position="1"/>
        <end position="449"/>
    </location>
</feature>
<feature type="region of interest" description="Disordered" evidence="2">
    <location>
        <begin position="1"/>
        <end position="42"/>
    </location>
</feature>
<feature type="compositionally biased region" description="Basic residues" evidence="2">
    <location>
        <begin position="1"/>
        <end position="10"/>
    </location>
</feature>
<feature type="compositionally biased region" description="Gly residues" evidence="2">
    <location>
        <begin position="12"/>
        <end position="21"/>
    </location>
</feature>
<feature type="compositionally biased region" description="Low complexity" evidence="2">
    <location>
        <begin position="22"/>
        <end position="31"/>
    </location>
</feature>
<feature type="sequence conflict" description="In Ref. 1; CAA35258." evidence="3" ref="1">
    <original>D</original>
    <variation>H</variation>
    <location>
        <position position="43"/>
    </location>
</feature>
<feature type="sequence conflict" description="In Ref. 1; CAA35258." evidence="3" ref="1">
    <original>L</original>
    <variation>V</variation>
    <location>
        <position position="104"/>
    </location>
</feature>
<feature type="sequence conflict" description="In Ref. 4; CAA24133." evidence="3" ref="4">
    <original>L</original>
    <variation>V</variation>
    <location>
        <position position="399"/>
    </location>
</feature>
<dbReference type="EMBL" id="X17400">
    <property type="protein sequence ID" value="CAA35258.1"/>
    <property type="molecule type" value="mRNA"/>
</dbReference>
<dbReference type="EMBL" id="CH466526">
    <property type="protein sequence ID" value="EDL36825.1"/>
    <property type="molecule type" value="Genomic_DNA"/>
</dbReference>
<dbReference type="EMBL" id="BC043723">
    <property type="protein sequence ID" value="AAH43723.1"/>
    <property type="molecule type" value="mRNA"/>
</dbReference>
<dbReference type="EMBL" id="V00756">
    <property type="protein sequence ID" value="CAA24133.1"/>
    <property type="status" value="ALT_SEQ"/>
    <property type="molecule type" value="mRNA"/>
</dbReference>
<dbReference type="CCDS" id="CCDS25893.1"/>
<dbReference type="PIR" id="A44989">
    <property type="entry name" value="A44989"/>
</dbReference>
<dbReference type="RefSeq" id="NP_038590.2">
    <property type="nucleotide sequence ID" value="NM_013562.3"/>
</dbReference>
<dbReference type="SMR" id="P19182"/>
<dbReference type="BioGRID" id="200544">
    <property type="interactions" value="5"/>
</dbReference>
<dbReference type="CORUM" id="P19182"/>
<dbReference type="FunCoup" id="P19182">
    <property type="interactions" value="3631"/>
</dbReference>
<dbReference type="IntAct" id="P19182">
    <property type="interactions" value="1"/>
</dbReference>
<dbReference type="STRING" id="10090.ENSMUSP00000001672"/>
<dbReference type="GlyGen" id="P19182">
    <property type="glycosylation" value="1 site, 1 O-linked glycan (1 site)"/>
</dbReference>
<dbReference type="iPTMnet" id="P19182"/>
<dbReference type="PhosphoSitePlus" id="P19182"/>
<dbReference type="PaxDb" id="10090-ENSMUSP00000001672"/>
<dbReference type="PeptideAtlas" id="P19182"/>
<dbReference type="ProteomicsDB" id="269382"/>
<dbReference type="Pumba" id="P19182"/>
<dbReference type="DNASU" id="15982"/>
<dbReference type="Ensembl" id="ENSMUST00000001672.12">
    <property type="protein sequence ID" value="ENSMUSP00000001672.6"/>
    <property type="gene ID" value="ENSMUSG00000001627.13"/>
</dbReference>
<dbReference type="GeneID" id="15982"/>
<dbReference type="KEGG" id="mmu:15982"/>
<dbReference type="UCSC" id="uc007nky.2">
    <property type="organism name" value="mouse"/>
</dbReference>
<dbReference type="AGR" id="MGI:1316717"/>
<dbReference type="CTD" id="3475"/>
<dbReference type="MGI" id="MGI:1316717">
    <property type="gene designation" value="Ifrd1"/>
</dbReference>
<dbReference type="VEuPathDB" id="HostDB:ENSMUSG00000001627"/>
<dbReference type="eggNOG" id="KOG2842">
    <property type="taxonomic scope" value="Eukaryota"/>
</dbReference>
<dbReference type="GeneTree" id="ENSGT00390000013347"/>
<dbReference type="HOGENOM" id="CLU_031384_1_0_1"/>
<dbReference type="InParanoid" id="P19182"/>
<dbReference type="OMA" id="EMHLHKF"/>
<dbReference type="OrthoDB" id="686784at2759"/>
<dbReference type="PhylomeDB" id="P19182"/>
<dbReference type="TreeFam" id="TF313638"/>
<dbReference type="BioGRID-ORCS" id="15982">
    <property type="hits" value="5 hits in 77 CRISPR screens"/>
</dbReference>
<dbReference type="ChiTaRS" id="Ifrd1">
    <property type="organism name" value="mouse"/>
</dbReference>
<dbReference type="PRO" id="PR:P19182"/>
<dbReference type="Proteomes" id="UP000000589">
    <property type="component" value="Chromosome 12"/>
</dbReference>
<dbReference type="RNAct" id="P19182">
    <property type="molecule type" value="protein"/>
</dbReference>
<dbReference type="Bgee" id="ENSMUSG00000001627">
    <property type="expression patterns" value="Expressed in secondary oocyte and 285 other cell types or tissues"/>
</dbReference>
<dbReference type="ExpressionAtlas" id="P19182">
    <property type="expression patterns" value="baseline and differential"/>
</dbReference>
<dbReference type="GO" id="GO:0005737">
    <property type="term" value="C:cytoplasm"/>
    <property type="evidence" value="ECO:0000314"/>
    <property type="project" value="MGI"/>
</dbReference>
<dbReference type="GO" id="GO:0005634">
    <property type="term" value="C:nucleus"/>
    <property type="evidence" value="ECO:0000314"/>
    <property type="project" value="MGI"/>
</dbReference>
<dbReference type="GO" id="GO:0016528">
    <property type="term" value="C:sarcoplasm"/>
    <property type="evidence" value="ECO:0000314"/>
    <property type="project" value="MGI"/>
</dbReference>
<dbReference type="GO" id="GO:0061629">
    <property type="term" value="F:RNA polymerase II-specific DNA-binding transcription factor binding"/>
    <property type="evidence" value="ECO:0000266"/>
    <property type="project" value="MGI"/>
</dbReference>
<dbReference type="GO" id="GO:0060612">
    <property type="term" value="P:adipose tissue development"/>
    <property type="evidence" value="ECO:0000315"/>
    <property type="project" value="MGI"/>
</dbReference>
<dbReference type="GO" id="GO:0045444">
    <property type="term" value="P:fat cell differentiation"/>
    <property type="evidence" value="ECO:0000315"/>
    <property type="project" value="MGI"/>
</dbReference>
<dbReference type="GO" id="GO:0042692">
    <property type="term" value="P:muscle cell differentiation"/>
    <property type="evidence" value="ECO:0000315"/>
    <property type="project" value="MGI"/>
</dbReference>
<dbReference type="GO" id="GO:0030517">
    <property type="term" value="P:negative regulation of axon extension"/>
    <property type="evidence" value="ECO:0000316"/>
    <property type="project" value="MGI"/>
</dbReference>
<dbReference type="GO" id="GO:0048671">
    <property type="term" value="P:negative regulation of collateral sprouting"/>
    <property type="evidence" value="ECO:0000316"/>
    <property type="project" value="MGI"/>
</dbReference>
<dbReference type="GO" id="GO:0045944">
    <property type="term" value="P:positive regulation of transcription by RNA polymerase II"/>
    <property type="evidence" value="ECO:0000266"/>
    <property type="project" value="MGI"/>
</dbReference>
<dbReference type="GO" id="GO:0006357">
    <property type="term" value="P:regulation of transcription by RNA polymerase II"/>
    <property type="evidence" value="ECO:0000315"/>
    <property type="project" value="MGI"/>
</dbReference>
<dbReference type="GO" id="GO:0043403">
    <property type="term" value="P:skeletal muscle tissue regeneration"/>
    <property type="evidence" value="ECO:0000315"/>
    <property type="project" value="MGI"/>
</dbReference>
<dbReference type="GO" id="GO:0014706">
    <property type="term" value="P:striated muscle tissue development"/>
    <property type="evidence" value="ECO:0000315"/>
    <property type="project" value="MGI"/>
</dbReference>
<dbReference type="GO" id="GO:0016055">
    <property type="term" value="P:Wnt signaling pathway"/>
    <property type="evidence" value="ECO:0000315"/>
    <property type="project" value="MGI"/>
</dbReference>
<dbReference type="FunFam" id="1.25.10.10:FF:000259">
    <property type="entry name" value="interferon-related developmental regulator 1"/>
    <property type="match status" value="1"/>
</dbReference>
<dbReference type="Gene3D" id="1.25.10.10">
    <property type="entry name" value="Leucine-rich Repeat Variant"/>
    <property type="match status" value="1"/>
</dbReference>
<dbReference type="InterPro" id="IPR011989">
    <property type="entry name" value="ARM-like"/>
</dbReference>
<dbReference type="InterPro" id="IPR016024">
    <property type="entry name" value="ARM-type_fold"/>
</dbReference>
<dbReference type="InterPro" id="IPR039777">
    <property type="entry name" value="IFRD"/>
</dbReference>
<dbReference type="InterPro" id="IPR006921">
    <property type="entry name" value="Interferon-rel_develop_reg_C"/>
</dbReference>
<dbReference type="InterPro" id="IPR007701">
    <property type="entry name" value="Interferon-rel_develop_reg_N"/>
</dbReference>
<dbReference type="PANTHER" id="PTHR12354">
    <property type="entry name" value="INTERFERON-RELATED DEVELOPMENTAL REGULATOR"/>
    <property type="match status" value="1"/>
</dbReference>
<dbReference type="PANTHER" id="PTHR12354:SF6">
    <property type="entry name" value="INTERFERON-RELATED DEVELOPMENTAL REGULATOR 1"/>
    <property type="match status" value="1"/>
</dbReference>
<dbReference type="Pfam" id="PF05004">
    <property type="entry name" value="IFRD"/>
    <property type="match status" value="1"/>
</dbReference>
<dbReference type="Pfam" id="PF04836">
    <property type="entry name" value="IFRD_C"/>
    <property type="match status" value="1"/>
</dbReference>
<dbReference type="SUPFAM" id="SSF48371">
    <property type="entry name" value="ARM repeat"/>
    <property type="match status" value="1"/>
</dbReference>
<protein>
    <recommendedName>
        <fullName>Interferon-related developmental regulator 1</fullName>
    </recommendedName>
    <alternativeName>
        <fullName>Nerve growth factor-inducible protein PC4</fullName>
    </alternativeName>
    <alternativeName>
        <fullName>TPA-induced sequence 7</fullName>
        <shortName>TIS7 protein</shortName>
    </alternativeName>
</protein>
<evidence type="ECO:0000250" key="1"/>
<evidence type="ECO:0000256" key="2">
    <source>
        <dbReference type="SAM" id="MobiDB-lite"/>
    </source>
</evidence>
<evidence type="ECO:0000305" key="3"/>
<evidence type="ECO:0000305" key="4">
    <source>
    </source>
</evidence>
<sequence length="449" mass="49935">MPKNKKRNAPHRGGGGGGGSGAATSAATAGGPHRTVQPFSDEDASIETMSHCSGYSDPSSFAEDGPEVLDEEGTQEDLEYKLKGLIDLTLDKSAKTRQAALEGLKNALSSKVLYEFVLERRMTLTDSIERCLKKGKSDEQRAAAAVASVLCIQLGPGFESEEILKTLGPILKKIICDGAASIQARQTCATCFGVCCFIATDDITELYSTLECFENIFTKSYLKEKDTNVTCSTPNTVLHISSLLAWTLLLTICPINEVKKKLELHFHKLPSLLSCDDVNMRIAAGESLALLFELARGMESDFFYEDMDSLTQMLRALATDGNKHRAKVDKRKQRSVFRDVLRAVEERDFPTETVKFGPERMYIDSWVKKHTYDTFKEVLGSGMQYHLQTNEFLRNVFELGPPVMLDAATLKTMKISRFERHLYNSAAFKARTKARSKCRDKRADVGEFL</sequence>
<organism>
    <name type="scientific">Mus musculus</name>
    <name type="common">Mouse</name>
    <dbReference type="NCBI Taxonomy" id="10090"/>
    <lineage>
        <taxon>Eukaryota</taxon>
        <taxon>Metazoa</taxon>
        <taxon>Chordata</taxon>
        <taxon>Craniata</taxon>
        <taxon>Vertebrata</taxon>
        <taxon>Euteleostomi</taxon>
        <taxon>Mammalia</taxon>
        <taxon>Eutheria</taxon>
        <taxon>Euarchontoglires</taxon>
        <taxon>Glires</taxon>
        <taxon>Rodentia</taxon>
        <taxon>Myomorpha</taxon>
        <taxon>Muroidea</taxon>
        <taxon>Muridae</taxon>
        <taxon>Murinae</taxon>
        <taxon>Mus</taxon>
        <taxon>Mus</taxon>
    </lineage>
</organism>
<gene>
    <name type="primary">Ifrd1</name>
    <name type="synonym">Tis7</name>
</gene>
<comment type="function">
    <text>Could play a role in regulating gene activity in the proliferative and/or differentiative pathways induced by NGF. May be an autocrine factor that attenuates or amplifies the initial ligand-induced signal.</text>
</comment>
<comment type="subunit">
    <text evidence="1">Interacts with PSIP1/LEDGF.</text>
</comment>
<comment type="induction">
    <text>By mitogens such as TPA in 373 cells and by nerve growth factor in PC12 pheochromocytoma cells.</text>
</comment>
<comment type="similarity">
    <text evidence="3">Belongs to the IFRD family.</text>
</comment>
<comment type="caution">
    <text evidence="4">Was originally thought to be interferon beta-2.</text>
</comment>
<name>IFRD1_MOUSE</name>
<keyword id="KW-0217">Developmental protein</keyword>
<keyword id="KW-0221">Differentiation</keyword>
<keyword id="KW-1185">Reference proteome</keyword>
<proteinExistence type="evidence at protein level"/>
<accession>P19182</accession>
<accession>P21835</accession>
<accession>P70228</accession>
<accession>Q80XM4</accession>
<reference key="1">
    <citation type="journal article" date="1989" name="Oncogene">
        <title>Characterization of TIS7, a gene induced in Swiss 3T3 cells by the tumor promoter tetradecanoyl phorbol acetate.</title>
        <authorList>
            <person name="Varnum B.C."/>
            <person name="Lim R.W."/>
            <person name="Herschman H.R."/>
        </authorList>
    </citation>
    <scope>NUCLEOTIDE SEQUENCE [MRNA]</scope>
</reference>
<reference key="2">
    <citation type="submission" date="2005-09" db="EMBL/GenBank/DDBJ databases">
        <authorList>
            <person name="Mural R.J."/>
            <person name="Adams M.D."/>
            <person name="Myers E.W."/>
            <person name="Smith H.O."/>
            <person name="Venter J.C."/>
        </authorList>
    </citation>
    <scope>NUCLEOTIDE SEQUENCE [LARGE SCALE GENOMIC DNA]</scope>
</reference>
<reference key="3">
    <citation type="journal article" date="2004" name="Genome Res.">
        <title>The status, quality, and expansion of the NIH full-length cDNA project: the Mammalian Gene Collection (MGC).</title>
        <authorList>
            <consortium name="The MGC Project Team"/>
        </authorList>
    </citation>
    <scope>NUCLEOTIDE SEQUENCE [LARGE SCALE MRNA]</scope>
    <source>
        <tissue>Eye</tissue>
    </source>
</reference>
<reference key="4">
    <citation type="journal article" date="1982" name="Nucleic Acids Res.">
        <title>Molecular cloning of partial cDNA copies of two distinct mouse IFN-beta mRNAs.</title>
        <authorList>
            <person name="Skup D."/>
            <person name="Windass J.D."/>
            <person name="Sor F.S."/>
            <person name="George H."/>
            <person name="Williams B.R."/>
            <person name="Fukuhara H."/>
            <person name="de Maeyer-Guignard J."/>
            <person name="de Maeyer E."/>
        </authorList>
    </citation>
    <scope>NUCLEOTIDE SEQUENCE [MRNA] OF 386-449</scope>
</reference>
<reference key="5">
    <citation type="journal article" date="2010" name="Cell">
        <title>A tissue-specific atlas of mouse protein phosphorylation and expression.</title>
        <authorList>
            <person name="Huttlin E.L."/>
            <person name="Jedrychowski M.P."/>
            <person name="Elias J.E."/>
            <person name="Goswami T."/>
            <person name="Rad R."/>
            <person name="Beausoleil S.A."/>
            <person name="Villen J."/>
            <person name="Haas W."/>
            <person name="Sowa M.E."/>
            <person name="Gygi S.P."/>
        </authorList>
    </citation>
    <scope>IDENTIFICATION BY MASS SPECTROMETRY [LARGE SCALE ANALYSIS]</scope>
    <source>
        <tissue>Pancreas</tissue>
    </source>
</reference>